<organismHost>
    <name type="scientific">Acanthamoeba polyphaga</name>
    <name type="common">Amoeba</name>
    <dbReference type="NCBI Taxonomy" id="5757"/>
</organismHost>
<feature type="chain" id="PRO_0000250629" description="Uncharacterized protein L437">
    <location>
        <begin position="1"/>
        <end position="284"/>
    </location>
</feature>
<gene>
    <name type="ordered locus">MIMI_L437</name>
</gene>
<keyword id="KW-1185">Reference proteome</keyword>
<reference key="1">
    <citation type="journal article" date="2004" name="Science">
        <title>The 1.2-megabase genome sequence of Mimivirus.</title>
        <authorList>
            <person name="Raoult D."/>
            <person name="Audic S."/>
            <person name="Robert C."/>
            <person name="Abergel C."/>
            <person name="Renesto P."/>
            <person name="Ogata H."/>
            <person name="La Scola B."/>
            <person name="Susan M."/>
            <person name="Claverie J.-M."/>
        </authorList>
    </citation>
    <scope>NUCLEOTIDE SEQUENCE [LARGE SCALE GENOMIC DNA]</scope>
    <source>
        <strain>Rowbotham-Bradford</strain>
    </source>
</reference>
<accession>Q5UQN0</accession>
<organism>
    <name type="scientific">Acanthamoeba polyphaga mimivirus</name>
    <name type="common">APMV</name>
    <dbReference type="NCBI Taxonomy" id="212035"/>
    <lineage>
        <taxon>Viruses</taxon>
        <taxon>Varidnaviria</taxon>
        <taxon>Bamfordvirae</taxon>
        <taxon>Nucleocytoviricota</taxon>
        <taxon>Megaviricetes</taxon>
        <taxon>Imitervirales</taxon>
        <taxon>Mimiviridae</taxon>
        <taxon>Megamimivirinae</taxon>
        <taxon>Mimivirus</taxon>
        <taxon>Mimivirus bradfordmassiliense</taxon>
    </lineage>
</organism>
<protein>
    <recommendedName>
        <fullName>Uncharacterized protein L437</fullName>
    </recommendedName>
</protein>
<proteinExistence type="predicted"/>
<name>YL437_MIMIV</name>
<dbReference type="EMBL" id="AY653733">
    <property type="protein sequence ID" value="AAV50705.1"/>
    <property type="molecule type" value="Genomic_DNA"/>
</dbReference>
<dbReference type="KEGG" id="vg:9925059"/>
<dbReference type="OrthoDB" id="9258at10239"/>
<dbReference type="Proteomes" id="UP000001134">
    <property type="component" value="Genome"/>
</dbReference>
<dbReference type="Gene3D" id="3.40.50.300">
    <property type="entry name" value="P-loop containing nucleotide triphosphate hydrolases"/>
    <property type="match status" value="1"/>
</dbReference>
<dbReference type="InterPro" id="IPR006758">
    <property type="entry name" value="A32L"/>
</dbReference>
<dbReference type="InterPro" id="IPR027417">
    <property type="entry name" value="P-loop_NTPase"/>
</dbReference>
<dbReference type="Pfam" id="PF04665">
    <property type="entry name" value="Pox_A32"/>
    <property type="match status" value="1"/>
</dbReference>
<dbReference type="SUPFAM" id="SSF52540">
    <property type="entry name" value="P-loop containing nucleoside triphosphate hydrolases"/>
    <property type="match status" value="1"/>
</dbReference>
<sequence>MNYNKFELMEFDLNKMVIDPSIVMIAKRGSGKSWIVRDVMYHYRHLPCGVVIAPTDRMNSFYKYFFPDLFIHYEITEAILKNILLRQQMIIDKQKQKKKQGLKIDPSGILIMDDCLSQKKNWSKIQEITEILMNGRHYRLTYVLTMQTPLGLTPDLRLNFDYIFLLKDDTQVNKKKLYNNYAGMFPSQLAFEKVLAKCTEGHKCMVIDNRKPADKIQDKVFWFKARDRKFSFGAREFKDMHKKYYNPEYGRDRYRKLMEGEDVLFGLKKNDTNLKVNLREIPTH</sequence>